<gene>
    <name evidence="1" type="primary">ribA</name>
    <name type="ordered locus">STM1711</name>
</gene>
<organism>
    <name type="scientific">Salmonella typhimurium (strain LT2 / SGSC1412 / ATCC 700720)</name>
    <dbReference type="NCBI Taxonomy" id="99287"/>
    <lineage>
        <taxon>Bacteria</taxon>
        <taxon>Pseudomonadati</taxon>
        <taxon>Pseudomonadota</taxon>
        <taxon>Gammaproteobacteria</taxon>
        <taxon>Enterobacterales</taxon>
        <taxon>Enterobacteriaceae</taxon>
        <taxon>Salmonella</taxon>
    </lineage>
</organism>
<accession>P66030</accession>
<accession>Q8XFY7</accession>
<feature type="chain" id="PRO_0000151774" description="GTP cyclohydrolase-2">
    <location>
        <begin position="1"/>
        <end position="196"/>
    </location>
</feature>
<feature type="active site" description="Proton acceptor" evidence="1">
    <location>
        <position position="126"/>
    </location>
</feature>
<feature type="active site" description="Nucleophile" evidence="1">
    <location>
        <position position="128"/>
    </location>
</feature>
<feature type="binding site" evidence="1">
    <location>
        <begin position="49"/>
        <end position="53"/>
    </location>
    <ligand>
        <name>GTP</name>
        <dbReference type="ChEBI" id="CHEBI:37565"/>
    </ligand>
</feature>
<feature type="binding site" evidence="1">
    <location>
        <position position="54"/>
    </location>
    <ligand>
        <name>Zn(2+)</name>
        <dbReference type="ChEBI" id="CHEBI:29105"/>
        <note>catalytic</note>
    </ligand>
</feature>
<feature type="binding site" evidence="1">
    <location>
        <position position="65"/>
    </location>
    <ligand>
        <name>Zn(2+)</name>
        <dbReference type="ChEBI" id="CHEBI:29105"/>
        <note>catalytic</note>
    </ligand>
</feature>
<feature type="binding site" evidence="1">
    <location>
        <position position="67"/>
    </location>
    <ligand>
        <name>Zn(2+)</name>
        <dbReference type="ChEBI" id="CHEBI:29105"/>
        <note>catalytic</note>
    </ligand>
</feature>
<feature type="binding site" evidence="1">
    <location>
        <position position="70"/>
    </location>
    <ligand>
        <name>GTP</name>
        <dbReference type="ChEBI" id="CHEBI:37565"/>
    </ligand>
</feature>
<feature type="binding site" evidence="1">
    <location>
        <begin position="92"/>
        <end position="94"/>
    </location>
    <ligand>
        <name>GTP</name>
        <dbReference type="ChEBI" id="CHEBI:37565"/>
    </ligand>
</feature>
<feature type="binding site" evidence="1">
    <location>
        <position position="114"/>
    </location>
    <ligand>
        <name>GTP</name>
        <dbReference type="ChEBI" id="CHEBI:37565"/>
    </ligand>
</feature>
<feature type="binding site" evidence="1">
    <location>
        <position position="149"/>
    </location>
    <ligand>
        <name>GTP</name>
        <dbReference type="ChEBI" id="CHEBI:37565"/>
    </ligand>
</feature>
<feature type="binding site" evidence="1">
    <location>
        <position position="154"/>
    </location>
    <ligand>
        <name>GTP</name>
        <dbReference type="ChEBI" id="CHEBI:37565"/>
    </ligand>
</feature>
<name>RIBA_SALTY</name>
<reference key="1">
    <citation type="journal article" date="2001" name="Nature">
        <title>Complete genome sequence of Salmonella enterica serovar Typhimurium LT2.</title>
        <authorList>
            <person name="McClelland M."/>
            <person name="Sanderson K.E."/>
            <person name="Spieth J."/>
            <person name="Clifton S.W."/>
            <person name="Latreille P."/>
            <person name="Courtney L."/>
            <person name="Porwollik S."/>
            <person name="Ali J."/>
            <person name="Dante M."/>
            <person name="Du F."/>
            <person name="Hou S."/>
            <person name="Layman D."/>
            <person name="Leonard S."/>
            <person name="Nguyen C."/>
            <person name="Scott K."/>
            <person name="Holmes A."/>
            <person name="Grewal N."/>
            <person name="Mulvaney E."/>
            <person name="Ryan E."/>
            <person name="Sun H."/>
            <person name="Florea L."/>
            <person name="Miller W."/>
            <person name="Stoneking T."/>
            <person name="Nhan M."/>
            <person name="Waterston R."/>
            <person name="Wilson R.K."/>
        </authorList>
    </citation>
    <scope>NUCLEOTIDE SEQUENCE [LARGE SCALE GENOMIC DNA]</scope>
    <source>
        <strain>LT2 / SGSC1412 / ATCC 700720</strain>
    </source>
</reference>
<keyword id="KW-0342">GTP-binding</keyword>
<keyword id="KW-0378">Hydrolase</keyword>
<keyword id="KW-0479">Metal-binding</keyword>
<keyword id="KW-0547">Nucleotide-binding</keyword>
<keyword id="KW-1185">Reference proteome</keyword>
<keyword id="KW-0686">Riboflavin biosynthesis</keyword>
<keyword id="KW-0862">Zinc</keyword>
<comment type="function">
    <text evidence="1">Catalyzes the conversion of GTP to 2,5-diamino-6-ribosylamino-4(3H)-pyrimidinone 5'-phosphate (DARP), formate and pyrophosphate.</text>
</comment>
<comment type="catalytic activity">
    <reaction evidence="1">
        <text>GTP + 4 H2O = 2,5-diamino-6-hydroxy-4-(5-phosphoribosylamino)-pyrimidine + formate + 2 phosphate + 3 H(+)</text>
        <dbReference type="Rhea" id="RHEA:23704"/>
        <dbReference type="ChEBI" id="CHEBI:15377"/>
        <dbReference type="ChEBI" id="CHEBI:15378"/>
        <dbReference type="ChEBI" id="CHEBI:15740"/>
        <dbReference type="ChEBI" id="CHEBI:37565"/>
        <dbReference type="ChEBI" id="CHEBI:43474"/>
        <dbReference type="ChEBI" id="CHEBI:58614"/>
        <dbReference type="EC" id="3.5.4.25"/>
    </reaction>
</comment>
<comment type="cofactor">
    <cofactor evidence="1">
        <name>Zn(2+)</name>
        <dbReference type="ChEBI" id="CHEBI:29105"/>
    </cofactor>
    <text evidence="1">Binds 1 zinc ion per subunit.</text>
</comment>
<comment type="pathway">
    <text evidence="1">Cofactor biosynthesis; riboflavin biosynthesis; 5-amino-6-(D-ribitylamino)uracil from GTP: step 1/4.</text>
</comment>
<comment type="subunit">
    <text evidence="1">Homodimer.</text>
</comment>
<comment type="similarity">
    <text evidence="1">Belongs to the GTP cyclohydrolase II family.</text>
</comment>
<dbReference type="EC" id="3.5.4.25" evidence="1"/>
<dbReference type="EMBL" id="AE006468">
    <property type="protein sequence ID" value="AAL20629.1"/>
    <property type="molecule type" value="Genomic_DNA"/>
</dbReference>
<dbReference type="RefSeq" id="NP_460670.1">
    <property type="nucleotide sequence ID" value="NC_003197.2"/>
</dbReference>
<dbReference type="RefSeq" id="WP_001176284.1">
    <property type="nucleotide sequence ID" value="NC_003197.2"/>
</dbReference>
<dbReference type="SMR" id="P66030"/>
<dbReference type="STRING" id="99287.STM1711"/>
<dbReference type="PaxDb" id="99287-STM1711"/>
<dbReference type="GeneID" id="1253230"/>
<dbReference type="GeneID" id="66756188"/>
<dbReference type="KEGG" id="stm:STM1711"/>
<dbReference type="PATRIC" id="fig|99287.12.peg.1806"/>
<dbReference type="HOGENOM" id="CLU_020273_2_1_6"/>
<dbReference type="OMA" id="CRDQLEA"/>
<dbReference type="PhylomeDB" id="P66030"/>
<dbReference type="BioCyc" id="SENT99287:STM1711-MONOMER"/>
<dbReference type="UniPathway" id="UPA00275">
    <property type="reaction ID" value="UER00400"/>
</dbReference>
<dbReference type="Proteomes" id="UP000001014">
    <property type="component" value="Chromosome"/>
</dbReference>
<dbReference type="GO" id="GO:0005829">
    <property type="term" value="C:cytosol"/>
    <property type="evidence" value="ECO:0000318"/>
    <property type="project" value="GO_Central"/>
</dbReference>
<dbReference type="GO" id="GO:0005525">
    <property type="term" value="F:GTP binding"/>
    <property type="evidence" value="ECO:0007669"/>
    <property type="project" value="UniProtKB-KW"/>
</dbReference>
<dbReference type="GO" id="GO:0003935">
    <property type="term" value="F:GTP cyclohydrolase II activity"/>
    <property type="evidence" value="ECO:0000318"/>
    <property type="project" value="GO_Central"/>
</dbReference>
<dbReference type="GO" id="GO:0008270">
    <property type="term" value="F:zinc ion binding"/>
    <property type="evidence" value="ECO:0007669"/>
    <property type="project" value="UniProtKB-UniRule"/>
</dbReference>
<dbReference type="GO" id="GO:0009231">
    <property type="term" value="P:riboflavin biosynthetic process"/>
    <property type="evidence" value="ECO:0000318"/>
    <property type="project" value="GO_Central"/>
</dbReference>
<dbReference type="CDD" id="cd00641">
    <property type="entry name" value="GTP_cyclohydro2"/>
    <property type="match status" value="1"/>
</dbReference>
<dbReference type="FunFam" id="3.40.50.10990:FF:000002">
    <property type="entry name" value="GTP cyclohydrolase-2"/>
    <property type="match status" value="1"/>
</dbReference>
<dbReference type="Gene3D" id="3.40.50.10990">
    <property type="entry name" value="GTP cyclohydrolase II"/>
    <property type="match status" value="1"/>
</dbReference>
<dbReference type="HAMAP" id="MF_00179">
    <property type="entry name" value="RibA"/>
    <property type="match status" value="1"/>
</dbReference>
<dbReference type="InterPro" id="IPR032677">
    <property type="entry name" value="GTP_cyclohydro_II"/>
</dbReference>
<dbReference type="InterPro" id="IPR000926">
    <property type="entry name" value="RibA"/>
</dbReference>
<dbReference type="InterPro" id="IPR036144">
    <property type="entry name" value="RibA-like_sf"/>
</dbReference>
<dbReference type="NCBIfam" id="NF001591">
    <property type="entry name" value="PRK00393.1"/>
    <property type="match status" value="1"/>
</dbReference>
<dbReference type="NCBIfam" id="TIGR00505">
    <property type="entry name" value="ribA"/>
    <property type="match status" value="1"/>
</dbReference>
<dbReference type="PANTHER" id="PTHR21327:SF18">
    <property type="entry name" value="3,4-DIHYDROXY-2-BUTANONE 4-PHOSPHATE SYNTHASE"/>
    <property type="match status" value="1"/>
</dbReference>
<dbReference type="PANTHER" id="PTHR21327">
    <property type="entry name" value="GTP CYCLOHYDROLASE II-RELATED"/>
    <property type="match status" value="1"/>
</dbReference>
<dbReference type="Pfam" id="PF00925">
    <property type="entry name" value="GTP_cyclohydro2"/>
    <property type="match status" value="1"/>
</dbReference>
<dbReference type="SUPFAM" id="SSF142695">
    <property type="entry name" value="RibA-like"/>
    <property type="match status" value="1"/>
</dbReference>
<protein>
    <recommendedName>
        <fullName evidence="1">GTP cyclohydrolase-2</fullName>
        <ecNumber evidence="1">3.5.4.25</ecNumber>
    </recommendedName>
    <alternativeName>
        <fullName evidence="1">GTP cyclohydrolase II</fullName>
    </alternativeName>
</protein>
<sequence>MQLKRVAEAKLPTPLGDFLMVGFEELATGHDHAALVFGDISGKTPVLARVHSECLTGDALFSLRCDCGFQLEAALTHIAEEGRGILIYHRQEGRNIGLLNKIRAYALQDQGYDTVEANHQLGFAADERDFTLCADMFKLLGVDEVRLLTNNPKKVEILTEAGINIVERVPLIVGRNPNNEHYLDTKAAKMGHLLSK</sequence>
<evidence type="ECO:0000255" key="1">
    <source>
        <dbReference type="HAMAP-Rule" id="MF_00179"/>
    </source>
</evidence>
<proteinExistence type="inferred from homology"/>